<organism>
    <name type="scientific">Desulfovibrio desulfuricans (strain ATCC 27774 / DSM 6949 / MB)</name>
    <dbReference type="NCBI Taxonomy" id="525146"/>
    <lineage>
        <taxon>Bacteria</taxon>
        <taxon>Pseudomonadati</taxon>
        <taxon>Thermodesulfobacteriota</taxon>
        <taxon>Desulfovibrionia</taxon>
        <taxon>Desulfovibrionales</taxon>
        <taxon>Desulfovibrionaceae</taxon>
        <taxon>Desulfovibrio</taxon>
    </lineage>
</organism>
<sequence>MPKHGKKFRNALEGTDLQERFSVEDAVGKSLGAAFAKFDETVDVAIRLGVDPKYSDQMVRGAVTLPNGLGKTVRVAVFCKGEKQAEAREAGADIVGAEDLVAEVKAGNLNFDAAVATPDVMALVGQIGRLLGPRGLMPNAKTGSVTFDVAKAVSELKAGRVDFKVDKAGVLHAPLGKASFGPEKILGNLKALLDTVNRLKPSSAKGTYLISMAISTTMGPGFKVDMTQVKKFLEG</sequence>
<evidence type="ECO:0000255" key="1">
    <source>
        <dbReference type="HAMAP-Rule" id="MF_01318"/>
    </source>
</evidence>
<evidence type="ECO:0000305" key="2"/>
<comment type="function">
    <text evidence="1">Binds directly to 23S rRNA. The L1 stalk is quite mobile in the ribosome, and is involved in E site tRNA release.</text>
</comment>
<comment type="function">
    <text evidence="1">Protein L1 is also a translational repressor protein, it controls the translation of the L11 operon by binding to its mRNA.</text>
</comment>
<comment type="subunit">
    <text evidence="1">Part of the 50S ribosomal subunit.</text>
</comment>
<comment type="similarity">
    <text evidence="1">Belongs to the universal ribosomal protein uL1 family.</text>
</comment>
<name>RL1_DESDA</name>
<keyword id="KW-0678">Repressor</keyword>
<keyword id="KW-0687">Ribonucleoprotein</keyword>
<keyword id="KW-0689">Ribosomal protein</keyword>
<keyword id="KW-0694">RNA-binding</keyword>
<keyword id="KW-0699">rRNA-binding</keyword>
<keyword id="KW-0810">Translation regulation</keyword>
<keyword id="KW-0820">tRNA-binding</keyword>
<accession>B8J1A5</accession>
<gene>
    <name evidence="1" type="primary">rplA</name>
    <name type="ordered locus">Ddes_1633</name>
</gene>
<proteinExistence type="inferred from homology"/>
<protein>
    <recommendedName>
        <fullName evidence="1">Large ribosomal subunit protein uL1</fullName>
    </recommendedName>
    <alternativeName>
        <fullName evidence="2">50S ribosomal protein L1</fullName>
    </alternativeName>
</protein>
<feature type="chain" id="PRO_1000165675" description="Large ribosomal subunit protein uL1">
    <location>
        <begin position="1"/>
        <end position="235"/>
    </location>
</feature>
<reference key="1">
    <citation type="submission" date="2009-01" db="EMBL/GenBank/DDBJ databases">
        <title>Complete sequence of Desulfovibrio desulfuricans subsp. desulfuricans str. ATCC 27774.</title>
        <authorList>
            <consortium name="US DOE Joint Genome Institute"/>
            <person name="Lucas S."/>
            <person name="Copeland A."/>
            <person name="Lapidus A."/>
            <person name="Glavina del Rio T."/>
            <person name="Tice H."/>
            <person name="Bruce D."/>
            <person name="Goodwin L."/>
            <person name="Pitluck S."/>
            <person name="Sims D."/>
            <person name="Lu M."/>
            <person name="Kiss H."/>
            <person name="Meineke L."/>
            <person name="Brettin T."/>
            <person name="Detter J.C."/>
            <person name="Han C."/>
            <person name="Larimer F."/>
            <person name="Land M."/>
            <person name="Hauser L."/>
            <person name="Kyrpides N."/>
            <person name="Ovchinnikova G."/>
            <person name="Hazen T.C."/>
        </authorList>
    </citation>
    <scope>NUCLEOTIDE SEQUENCE [LARGE SCALE GENOMIC DNA]</scope>
    <source>
        <strain>ATCC 27774 / DSM 6949 / MB</strain>
    </source>
</reference>
<dbReference type="EMBL" id="CP001358">
    <property type="protein sequence ID" value="ACL49532.1"/>
    <property type="molecule type" value="Genomic_DNA"/>
</dbReference>
<dbReference type="SMR" id="B8J1A5"/>
<dbReference type="STRING" id="525146.Ddes_1633"/>
<dbReference type="KEGG" id="dds:Ddes_1633"/>
<dbReference type="eggNOG" id="COG0081">
    <property type="taxonomic scope" value="Bacteria"/>
</dbReference>
<dbReference type="HOGENOM" id="CLU_062853_0_0_7"/>
<dbReference type="GO" id="GO:0022625">
    <property type="term" value="C:cytosolic large ribosomal subunit"/>
    <property type="evidence" value="ECO:0007669"/>
    <property type="project" value="TreeGrafter"/>
</dbReference>
<dbReference type="GO" id="GO:0019843">
    <property type="term" value="F:rRNA binding"/>
    <property type="evidence" value="ECO:0007669"/>
    <property type="project" value="UniProtKB-UniRule"/>
</dbReference>
<dbReference type="GO" id="GO:0003735">
    <property type="term" value="F:structural constituent of ribosome"/>
    <property type="evidence" value="ECO:0007669"/>
    <property type="project" value="InterPro"/>
</dbReference>
<dbReference type="GO" id="GO:0000049">
    <property type="term" value="F:tRNA binding"/>
    <property type="evidence" value="ECO:0007669"/>
    <property type="project" value="UniProtKB-KW"/>
</dbReference>
<dbReference type="GO" id="GO:0006417">
    <property type="term" value="P:regulation of translation"/>
    <property type="evidence" value="ECO:0007669"/>
    <property type="project" value="UniProtKB-KW"/>
</dbReference>
<dbReference type="GO" id="GO:0006412">
    <property type="term" value="P:translation"/>
    <property type="evidence" value="ECO:0007669"/>
    <property type="project" value="UniProtKB-UniRule"/>
</dbReference>
<dbReference type="CDD" id="cd00403">
    <property type="entry name" value="Ribosomal_L1"/>
    <property type="match status" value="1"/>
</dbReference>
<dbReference type="FunFam" id="3.40.50.790:FF:000001">
    <property type="entry name" value="50S ribosomal protein L1"/>
    <property type="match status" value="1"/>
</dbReference>
<dbReference type="Gene3D" id="3.30.190.20">
    <property type="match status" value="1"/>
</dbReference>
<dbReference type="Gene3D" id="3.40.50.790">
    <property type="match status" value="1"/>
</dbReference>
<dbReference type="HAMAP" id="MF_01318_B">
    <property type="entry name" value="Ribosomal_uL1_B"/>
    <property type="match status" value="1"/>
</dbReference>
<dbReference type="InterPro" id="IPR005878">
    <property type="entry name" value="Ribosom_uL1_bac-type"/>
</dbReference>
<dbReference type="InterPro" id="IPR002143">
    <property type="entry name" value="Ribosomal_uL1"/>
</dbReference>
<dbReference type="InterPro" id="IPR023674">
    <property type="entry name" value="Ribosomal_uL1-like"/>
</dbReference>
<dbReference type="InterPro" id="IPR028364">
    <property type="entry name" value="Ribosomal_uL1/biogenesis"/>
</dbReference>
<dbReference type="InterPro" id="IPR016095">
    <property type="entry name" value="Ribosomal_uL1_3-a/b-sand"/>
</dbReference>
<dbReference type="InterPro" id="IPR023673">
    <property type="entry name" value="Ribosomal_uL1_CS"/>
</dbReference>
<dbReference type="NCBIfam" id="TIGR01169">
    <property type="entry name" value="rplA_bact"/>
    <property type="match status" value="1"/>
</dbReference>
<dbReference type="PANTHER" id="PTHR36427">
    <property type="entry name" value="54S RIBOSOMAL PROTEIN L1, MITOCHONDRIAL"/>
    <property type="match status" value="1"/>
</dbReference>
<dbReference type="PANTHER" id="PTHR36427:SF3">
    <property type="entry name" value="LARGE RIBOSOMAL SUBUNIT PROTEIN UL1M"/>
    <property type="match status" value="1"/>
</dbReference>
<dbReference type="Pfam" id="PF00687">
    <property type="entry name" value="Ribosomal_L1"/>
    <property type="match status" value="1"/>
</dbReference>
<dbReference type="PIRSF" id="PIRSF002155">
    <property type="entry name" value="Ribosomal_L1"/>
    <property type="match status" value="1"/>
</dbReference>
<dbReference type="SUPFAM" id="SSF56808">
    <property type="entry name" value="Ribosomal protein L1"/>
    <property type="match status" value="1"/>
</dbReference>
<dbReference type="PROSITE" id="PS01199">
    <property type="entry name" value="RIBOSOMAL_L1"/>
    <property type="match status" value="1"/>
</dbReference>